<reference key="1">
    <citation type="journal article" date="2002" name="Environ. Microbiol.">
        <title>Complete genome sequence and comparative analysis of the metabolically versatile Pseudomonas putida KT2440.</title>
        <authorList>
            <person name="Nelson K.E."/>
            <person name="Weinel C."/>
            <person name="Paulsen I.T."/>
            <person name="Dodson R.J."/>
            <person name="Hilbert H."/>
            <person name="Martins dos Santos V.A.P."/>
            <person name="Fouts D.E."/>
            <person name="Gill S.R."/>
            <person name="Pop M."/>
            <person name="Holmes M."/>
            <person name="Brinkac L.M."/>
            <person name="Beanan M.J."/>
            <person name="DeBoy R.T."/>
            <person name="Daugherty S.C."/>
            <person name="Kolonay J.F."/>
            <person name="Madupu R."/>
            <person name="Nelson W.C."/>
            <person name="White O."/>
            <person name="Peterson J.D."/>
            <person name="Khouri H.M."/>
            <person name="Hance I."/>
            <person name="Chris Lee P."/>
            <person name="Holtzapple E.K."/>
            <person name="Scanlan D."/>
            <person name="Tran K."/>
            <person name="Moazzez A."/>
            <person name="Utterback T.R."/>
            <person name="Rizzo M."/>
            <person name="Lee K."/>
            <person name="Kosack D."/>
            <person name="Moestl D."/>
            <person name="Wedler H."/>
            <person name="Lauber J."/>
            <person name="Stjepandic D."/>
            <person name="Hoheisel J."/>
            <person name="Straetz M."/>
            <person name="Heim S."/>
            <person name="Kiewitz C."/>
            <person name="Eisen J.A."/>
            <person name="Timmis K.N."/>
            <person name="Duesterhoeft A."/>
            <person name="Tuemmler B."/>
            <person name="Fraser C.M."/>
        </authorList>
    </citation>
    <scope>NUCLEOTIDE SEQUENCE [LARGE SCALE GENOMIC DNA]</scope>
    <source>
        <strain>ATCC 47054 / DSM 6125 / CFBP 8728 / NCIMB 11950 / KT2440</strain>
    </source>
</reference>
<gene>
    <name evidence="1" type="primary">murD</name>
    <name type="ordered locus">PP_1335</name>
</gene>
<comment type="function">
    <text evidence="1">Cell wall formation. Catalyzes the addition of glutamate to the nucleotide precursor UDP-N-acetylmuramoyl-L-alanine (UMA).</text>
</comment>
<comment type="catalytic activity">
    <reaction evidence="1">
        <text>UDP-N-acetyl-alpha-D-muramoyl-L-alanine + D-glutamate + ATP = UDP-N-acetyl-alpha-D-muramoyl-L-alanyl-D-glutamate + ADP + phosphate + H(+)</text>
        <dbReference type="Rhea" id="RHEA:16429"/>
        <dbReference type="ChEBI" id="CHEBI:15378"/>
        <dbReference type="ChEBI" id="CHEBI:29986"/>
        <dbReference type="ChEBI" id="CHEBI:30616"/>
        <dbReference type="ChEBI" id="CHEBI:43474"/>
        <dbReference type="ChEBI" id="CHEBI:83898"/>
        <dbReference type="ChEBI" id="CHEBI:83900"/>
        <dbReference type="ChEBI" id="CHEBI:456216"/>
        <dbReference type="EC" id="6.3.2.9"/>
    </reaction>
</comment>
<comment type="pathway">
    <text evidence="1">Cell wall biogenesis; peptidoglycan biosynthesis.</text>
</comment>
<comment type="subcellular location">
    <subcellularLocation>
        <location evidence="1">Cytoplasm</location>
    </subcellularLocation>
</comment>
<comment type="similarity">
    <text evidence="1">Belongs to the MurCDEF family.</text>
</comment>
<feature type="chain" id="PRO_0000109064" description="UDP-N-acetylmuramoylalanine--D-glutamate ligase">
    <location>
        <begin position="1"/>
        <end position="450"/>
    </location>
</feature>
<feature type="binding site" evidence="1">
    <location>
        <begin position="118"/>
        <end position="124"/>
    </location>
    <ligand>
        <name>ATP</name>
        <dbReference type="ChEBI" id="CHEBI:30616"/>
    </ligand>
</feature>
<accession>Q88N78</accession>
<organism>
    <name type="scientific">Pseudomonas putida (strain ATCC 47054 / DSM 6125 / CFBP 8728 / NCIMB 11950 / KT2440)</name>
    <dbReference type="NCBI Taxonomy" id="160488"/>
    <lineage>
        <taxon>Bacteria</taxon>
        <taxon>Pseudomonadati</taxon>
        <taxon>Pseudomonadota</taxon>
        <taxon>Gammaproteobacteria</taxon>
        <taxon>Pseudomonadales</taxon>
        <taxon>Pseudomonadaceae</taxon>
        <taxon>Pseudomonas</taxon>
    </lineage>
</organism>
<proteinExistence type="inferred from homology"/>
<sequence length="450" mass="48300">MSVSLIASDQFRIVVGLGKSGMSLVRFLASRGIAFAVADTREQPPELETLRRDYPQVEVRCGELDVDFLCRANELYVSPGLALATPALQQAAARGVKLSGDIELFARHAKAPIVAISGSNAKSTVTTLVGEMAAKAGKRVAVGGNLGTPALDLLADDIELYVLELSSFQLETTDQLNAEVATVLNISEDHMDRYSGLPAYHLAKHRIFRGARQVVVNRQDALSRPLPVEGRPCWTFGLNPPDFKAFGLREVDGEKYLAFEFQTLMPARELKVRGAHNQSNALAALALGHAAGLPFEPMLEALREFGGLAHRCQWVRERNGVNWYDDSKATNVGAALAAIEGLGADIEGKLVLIAGGDGKGAEFTALREPVKRFCRAVVLLGRDAERLAEALGDAVPLVRVKTLDDAVQQCAELAQAGDAVLLSPACASLDMFKNFEERGRLFAQAAGGLA</sequence>
<evidence type="ECO:0000255" key="1">
    <source>
        <dbReference type="HAMAP-Rule" id="MF_00639"/>
    </source>
</evidence>
<keyword id="KW-0067">ATP-binding</keyword>
<keyword id="KW-0131">Cell cycle</keyword>
<keyword id="KW-0132">Cell division</keyword>
<keyword id="KW-0133">Cell shape</keyword>
<keyword id="KW-0961">Cell wall biogenesis/degradation</keyword>
<keyword id="KW-0963">Cytoplasm</keyword>
<keyword id="KW-0436">Ligase</keyword>
<keyword id="KW-0547">Nucleotide-binding</keyword>
<keyword id="KW-0573">Peptidoglycan synthesis</keyword>
<keyword id="KW-1185">Reference proteome</keyword>
<dbReference type="EC" id="6.3.2.9" evidence="1"/>
<dbReference type="EMBL" id="AE015451">
    <property type="protein sequence ID" value="AAN66958.1"/>
    <property type="molecule type" value="Genomic_DNA"/>
</dbReference>
<dbReference type="RefSeq" id="NP_743494.1">
    <property type="nucleotide sequence ID" value="NC_002947.4"/>
</dbReference>
<dbReference type="SMR" id="Q88N78"/>
<dbReference type="STRING" id="160488.PP_1335"/>
<dbReference type="PaxDb" id="160488-PP_1335"/>
<dbReference type="KEGG" id="ppu:PP_1335"/>
<dbReference type="PATRIC" id="fig|160488.4.peg.1414"/>
<dbReference type="eggNOG" id="COG0771">
    <property type="taxonomic scope" value="Bacteria"/>
</dbReference>
<dbReference type="HOGENOM" id="CLU_032540_1_0_6"/>
<dbReference type="OrthoDB" id="9809796at2"/>
<dbReference type="PhylomeDB" id="Q88N78"/>
<dbReference type="BioCyc" id="PPUT160488:G1G01-1422-MONOMER"/>
<dbReference type="UniPathway" id="UPA00219"/>
<dbReference type="Proteomes" id="UP000000556">
    <property type="component" value="Chromosome"/>
</dbReference>
<dbReference type="GO" id="GO:0005737">
    <property type="term" value="C:cytoplasm"/>
    <property type="evidence" value="ECO:0007669"/>
    <property type="project" value="UniProtKB-SubCell"/>
</dbReference>
<dbReference type="GO" id="GO:0005524">
    <property type="term" value="F:ATP binding"/>
    <property type="evidence" value="ECO:0007669"/>
    <property type="project" value="UniProtKB-UniRule"/>
</dbReference>
<dbReference type="GO" id="GO:0008764">
    <property type="term" value="F:UDP-N-acetylmuramoylalanine-D-glutamate ligase activity"/>
    <property type="evidence" value="ECO:0007669"/>
    <property type="project" value="UniProtKB-UniRule"/>
</dbReference>
<dbReference type="GO" id="GO:0051301">
    <property type="term" value="P:cell division"/>
    <property type="evidence" value="ECO:0007669"/>
    <property type="project" value="UniProtKB-KW"/>
</dbReference>
<dbReference type="GO" id="GO:0071555">
    <property type="term" value="P:cell wall organization"/>
    <property type="evidence" value="ECO:0007669"/>
    <property type="project" value="UniProtKB-KW"/>
</dbReference>
<dbReference type="GO" id="GO:0009252">
    <property type="term" value="P:peptidoglycan biosynthetic process"/>
    <property type="evidence" value="ECO:0007669"/>
    <property type="project" value="UniProtKB-UniRule"/>
</dbReference>
<dbReference type="GO" id="GO:0008360">
    <property type="term" value="P:regulation of cell shape"/>
    <property type="evidence" value="ECO:0007669"/>
    <property type="project" value="UniProtKB-KW"/>
</dbReference>
<dbReference type="Gene3D" id="3.90.190.20">
    <property type="entry name" value="Mur ligase, C-terminal domain"/>
    <property type="match status" value="1"/>
</dbReference>
<dbReference type="Gene3D" id="3.40.1190.10">
    <property type="entry name" value="Mur-like, catalytic domain"/>
    <property type="match status" value="1"/>
</dbReference>
<dbReference type="Gene3D" id="3.40.50.720">
    <property type="entry name" value="NAD(P)-binding Rossmann-like Domain"/>
    <property type="match status" value="1"/>
</dbReference>
<dbReference type="HAMAP" id="MF_00639">
    <property type="entry name" value="MurD"/>
    <property type="match status" value="1"/>
</dbReference>
<dbReference type="InterPro" id="IPR036565">
    <property type="entry name" value="Mur-like_cat_sf"/>
</dbReference>
<dbReference type="InterPro" id="IPR004101">
    <property type="entry name" value="Mur_ligase_C"/>
</dbReference>
<dbReference type="InterPro" id="IPR036615">
    <property type="entry name" value="Mur_ligase_C_dom_sf"/>
</dbReference>
<dbReference type="InterPro" id="IPR013221">
    <property type="entry name" value="Mur_ligase_cen"/>
</dbReference>
<dbReference type="InterPro" id="IPR005762">
    <property type="entry name" value="MurD"/>
</dbReference>
<dbReference type="NCBIfam" id="TIGR01087">
    <property type="entry name" value="murD"/>
    <property type="match status" value="1"/>
</dbReference>
<dbReference type="PANTHER" id="PTHR43692">
    <property type="entry name" value="UDP-N-ACETYLMURAMOYLALANINE--D-GLUTAMATE LIGASE"/>
    <property type="match status" value="1"/>
</dbReference>
<dbReference type="PANTHER" id="PTHR43692:SF1">
    <property type="entry name" value="UDP-N-ACETYLMURAMOYLALANINE--D-GLUTAMATE LIGASE"/>
    <property type="match status" value="1"/>
</dbReference>
<dbReference type="Pfam" id="PF02875">
    <property type="entry name" value="Mur_ligase_C"/>
    <property type="match status" value="1"/>
</dbReference>
<dbReference type="Pfam" id="PF08245">
    <property type="entry name" value="Mur_ligase_M"/>
    <property type="match status" value="1"/>
</dbReference>
<dbReference type="Pfam" id="PF21799">
    <property type="entry name" value="MurD-like_N"/>
    <property type="match status" value="1"/>
</dbReference>
<dbReference type="SUPFAM" id="SSF51984">
    <property type="entry name" value="MurCD N-terminal domain"/>
    <property type="match status" value="1"/>
</dbReference>
<dbReference type="SUPFAM" id="SSF53623">
    <property type="entry name" value="MurD-like peptide ligases, catalytic domain"/>
    <property type="match status" value="1"/>
</dbReference>
<dbReference type="SUPFAM" id="SSF53244">
    <property type="entry name" value="MurD-like peptide ligases, peptide-binding domain"/>
    <property type="match status" value="1"/>
</dbReference>
<protein>
    <recommendedName>
        <fullName evidence="1">UDP-N-acetylmuramoylalanine--D-glutamate ligase</fullName>
        <ecNumber evidence="1">6.3.2.9</ecNumber>
    </recommendedName>
    <alternativeName>
        <fullName evidence="1">D-glutamic acid-adding enzyme</fullName>
    </alternativeName>
    <alternativeName>
        <fullName evidence="1">UDP-N-acetylmuramoyl-L-alanyl-D-glutamate synthetase</fullName>
    </alternativeName>
</protein>
<name>MURD_PSEPK</name>